<feature type="chain" id="PRO_0000229988" description="Tetraacyldisaccharide 4'-kinase">
    <location>
        <begin position="1"/>
        <end position="345"/>
    </location>
</feature>
<feature type="binding site" evidence="1">
    <location>
        <begin position="61"/>
        <end position="68"/>
    </location>
    <ligand>
        <name>ATP</name>
        <dbReference type="ChEBI" id="CHEBI:30616"/>
    </ligand>
</feature>
<dbReference type="EC" id="2.7.1.130" evidence="1"/>
<dbReference type="EMBL" id="AM039952">
    <property type="protein sequence ID" value="CAJ23932.1"/>
    <property type="molecule type" value="Genomic_DNA"/>
</dbReference>
<dbReference type="RefSeq" id="WP_011347457.1">
    <property type="nucleotide sequence ID" value="NZ_CP017190.1"/>
</dbReference>
<dbReference type="SMR" id="Q3BTC7"/>
<dbReference type="STRING" id="456327.BJD11_11115"/>
<dbReference type="KEGG" id="xcv:XCV2255"/>
<dbReference type="eggNOG" id="COG1663">
    <property type="taxonomic scope" value="Bacteria"/>
</dbReference>
<dbReference type="HOGENOM" id="CLU_038816_2_0_6"/>
<dbReference type="UniPathway" id="UPA00359">
    <property type="reaction ID" value="UER00482"/>
</dbReference>
<dbReference type="Proteomes" id="UP000007069">
    <property type="component" value="Chromosome"/>
</dbReference>
<dbReference type="GO" id="GO:0005886">
    <property type="term" value="C:plasma membrane"/>
    <property type="evidence" value="ECO:0007669"/>
    <property type="project" value="TreeGrafter"/>
</dbReference>
<dbReference type="GO" id="GO:0005524">
    <property type="term" value="F:ATP binding"/>
    <property type="evidence" value="ECO:0007669"/>
    <property type="project" value="UniProtKB-UniRule"/>
</dbReference>
<dbReference type="GO" id="GO:0009029">
    <property type="term" value="F:tetraacyldisaccharide 4'-kinase activity"/>
    <property type="evidence" value="ECO:0007669"/>
    <property type="project" value="UniProtKB-UniRule"/>
</dbReference>
<dbReference type="GO" id="GO:0009245">
    <property type="term" value="P:lipid A biosynthetic process"/>
    <property type="evidence" value="ECO:0007669"/>
    <property type="project" value="UniProtKB-UniRule"/>
</dbReference>
<dbReference type="GO" id="GO:0009244">
    <property type="term" value="P:lipopolysaccharide core region biosynthetic process"/>
    <property type="evidence" value="ECO:0007669"/>
    <property type="project" value="TreeGrafter"/>
</dbReference>
<dbReference type="HAMAP" id="MF_00409">
    <property type="entry name" value="LpxK"/>
    <property type="match status" value="1"/>
</dbReference>
<dbReference type="InterPro" id="IPR003758">
    <property type="entry name" value="LpxK"/>
</dbReference>
<dbReference type="InterPro" id="IPR027417">
    <property type="entry name" value="P-loop_NTPase"/>
</dbReference>
<dbReference type="NCBIfam" id="TIGR00682">
    <property type="entry name" value="lpxK"/>
    <property type="match status" value="1"/>
</dbReference>
<dbReference type="PANTHER" id="PTHR42724">
    <property type="entry name" value="TETRAACYLDISACCHARIDE 4'-KINASE"/>
    <property type="match status" value="1"/>
</dbReference>
<dbReference type="PANTHER" id="PTHR42724:SF1">
    <property type="entry name" value="TETRAACYLDISACCHARIDE 4'-KINASE, MITOCHONDRIAL-RELATED"/>
    <property type="match status" value="1"/>
</dbReference>
<dbReference type="Pfam" id="PF02606">
    <property type="entry name" value="LpxK"/>
    <property type="match status" value="1"/>
</dbReference>
<dbReference type="SUPFAM" id="SSF52540">
    <property type="entry name" value="P-loop containing nucleoside triphosphate hydrolases"/>
    <property type="match status" value="1"/>
</dbReference>
<comment type="function">
    <text evidence="1">Transfers the gamma-phosphate of ATP to the 4'-position of a tetraacyldisaccharide 1-phosphate intermediate (termed DS-1-P) to form tetraacyldisaccharide 1,4'-bis-phosphate (lipid IVA).</text>
</comment>
<comment type="catalytic activity">
    <reaction evidence="1">
        <text>a lipid A disaccharide + ATP = a lipid IVA + ADP + H(+)</text>
        <dbReference type="Rhea" id="RHEA:67840"/>
        <dbReference type="ChEBI" id="CHEBI:15378"/>
        <dbReference type="ChEBI" id="CHEBI:30616"/>
        <dbReference type="ChEBI" id="CHEBI:176343"/>
        <dbReference type="ChEBI" id="CHEBI:176425"/>
        <dbReference type="ChEBI" id="CHEBI:456216"/>
        <dbReference type="EC" id="2.7.1.130"/>
    </reaction>
</comment>
<comment type="pathway">
    <text evidence="1">Glycolipid biosynthesis; lipid IV(A) biosynthesis; lipid IV(A) from (3R)-3-hydroxytetradecanoyl-[acyl-carrier-protein] and UDP-N-acetyl-alpha-D-glucosamine: step 6/6.</text>
</comment>
<comment type="similarity">
    <text evidence="1">Belongs to the LpxK family.</text>
</comment>
<keyword id="KW-0067">ATP-binding</keyword>
<keyword id="KW-0418">Kinase</keyword>
<keyword id="KW-0441">Lipid A biosynthesis</keyword>
<keyword id="KW-0444">Lipid biosynthesis</keyword>
<keyword id="KW-0443">Lipid metabolism</keyword>
<keyword id="KW-0547">Nucleotide-binding</keyword>
<keyword id="KW-0808">Transferase</keyword>
<protein>
    <recommendedName>
        <fullName evidence="1">Tetraacyldisaccharide 4'-kinase</fullName>
        <ecNumber evidence="1">2.7.1.130</ecNumber>
    </recommendedName>
    <alternativeName>
        <fullName evidence="1">Lipid A 4'-kinase</fullName>
    </alternativeName>
</protein>
<reference key="1">
    <citation type="journal article" date="2005" name="J. Bacteriol.">
        <title>Insights into genome plasticity and pathogenicity of the plant pathogenic Bacterium Xanthomonas campestris pv. vesicatoria revealed by the complete genome sequence.</title>
        <authorList>
            <person name="Thieme F."/>
            <person name="Koebnik R."/>
            <person name="Bekel T."/>
            <person name="Berger C."/>
            <person name="Boch J."/>
            <person name="Buettner D."/>
            <person name="Caldana C."/>
            <person name="Gaigalat L."/>
            <person name="Goesmann A."/>
            <person name="Kay S."/>
            <person name="Kirchner O."/>
            <person name="Lanz C."/>
            <person name="Linke B."/>
            <person name="McHardy A.C."/>
            <person name="Meyer F."/>
            <person name="Mittenhuber G."/>
            <person name="Nies D.H."/>
            <person name="Niesbach-Kloesgen U."/>
            <person name="Patschkowski T."/>
            <person name="Rueckert C."/>
            <person name="Rupp O."/>
            <person name="Schneiker S."/>
            <person name="Schuster S.C."/>
            <person name="Vorhoelter F.J."/>
            <person name="Weber E."/>
            <person name="Puehler A."/>
            <person name="Bonas U."/>
            <person name="Bartels D."/>
            <person name="Kaiser O."/>
        </authorList>
    </citation>
    <scope>NUCLEOTIDE SEQUENCE [LARGE SCALE GENOMIC DNA]</scope>
    <source>
        <strain>85-10</strain>
    </source>
</reference>
<name>LPXK_XANE5</name>
<evidence type="ECO:0000255" key="1">
    <source>
        <dbReference type="HAMAP-Rule" id="MF_00409"/>
    </source>
</evidence>
<sequence length="345" mass="37674">MSKRGTRTPGYWYDNTPIPLPARILAPVYGAAIALRRALYRRGWRRRHRVPVPVIVVGNVTAGGTGKTPLTIALVVKLQEAGWTPGVASRGYGRDDAGTARWVEADTPVALGGDEPVLIAWKTGARVRVDSDRLAAARALVEAGCDIVICDDGLQHYRLARDVEIEVVDGQRRYGNGRLLPAGPLREPAARARDCDFRVVNLGQASATAAPQVPDDAGFGEWQMRLSIDSVQPMDGKRAQPLSMLAGQRVHAVAGIAHPERFFAMLRARGIGVVPHAFPDHHVYRAADFSFGSRLPVLMTEKDAVKCRPFADEWLYSVPLKAELPAAFWVSLLDRLNKLASRQGV</sequence>
<accession>Q3BTC7</accession>
<gene>
    <name evidence="1" type="primary">lpxK</name>
    <name type="ordered locus">XCV2255</name>
</gene>
<proteinExistence type="inferred from homology"/>
<organism>
    <name type="scientific">Xanthomonas euvesicatoria pv. vesicatoria (strain 85-10)</name>
    <name type="common">Xanthomonas campestris pv. vesicatoria</name>
    <dbReference type="NCBI Taxonomy" id="316273"/>
    <lineage>
        <taxon>Bacteria</taxon>
        <taxon>Pseudomonadati</taxon>
        <taxon>Pseudomonadota</taxon>
        <taxon>Gammaproteobacteria</taxon>
        <taxon>Lysobacterales</taxon>
        <taxon>Lysobacteraceae</taxon>
        <taxon>Xanthomonas</taxon>
    </lineage>
</organism>